<feature type="chain" id="PRO_0000343044" description="Golgi apparatus membrane protein TVP23">
    <location>
        <begin position="1"/>
        <end position="188"/>
    </location>
</feature>
<feature type="transmembrane region" description="Helical" evidence="2">
    <location>
        <begin position="13"/>
        <end position="33"/>
    </location>
</feature>
<feature type="transmembrane region" description="Helical" evidence="2">
    <location>
        <begin position="35"/>
        <end position="55"/>
    </location>
</feature>
<feature type="transmembrane region" description="Helical" evidence="2">
    <location>
        <begin position="108"/>
        <end position="128"/>
    </location>
</feature>
<feature type="transmembrane region" description="Helical" evidence="2">
    <location>
        <begin position="133"/>
        <end position="153"/>
    </location>
</feature>
<feature type="glycosylation site" description="N-linked (GlcNAc...) asparagine" evidence="2">
    <location>
        <position position="80"/>
    </location>
</feature>
<feature type="glycosylation site" description="N-linked (GlcNAc...) asparagine" evidence="2">
    <location>
        <position position="101"/>
    </location>
</feature>
<feature type="glycosylation site" description="N-linked (GlcNAc...) asparagine" evidence="2">
    <location>
        <position position="177"/>
    </location>
</feature>
<accession>Q1E9X9</accession>
<accession>A0A0D6K9P9</accession>
<accession>J3KHI5</accession>
<dbReference type="EMBL" id="GG704911">
    <property type="protein sequence ID" value="EAS35280.1"/>
    <property type="molecule type" value="Genomic_DNA"/>
</dbReference>
<dbReference type="RefSeq" id="XP_001246863.1">
    <property type="nucleotide sequence ID" value="XM_001246862.2"/>
</dbReference>
<dbReference type="FunCoup" id="Q1E9X9">
    <property type="interactions" value="372"/>
</dbReference>
<dbReference type="STRING" id="246410.Q1E9X9"/>
<dbReference type="GlyCosmos" id="Q1E9X9">
    <property type="glycosylation" value="3 sites, No reported glycans"/>
</dbReference>
<dbReference type="GeneID" id="4565611"/>
<dbReference type="KEGG" id="cim:CIMG_00634"/>
<dbReference type="VEuPathDB" id="FungiDB:CIMG_00634"/>
<dbReference type="InParanoid" id="Q1E9X9"/>
<dbReference type="OMA" id="KMIWWID"/>
<dbReference type="OrthoDB" id="2151161at2759"/>
<dbReference type="Proteomes" id="UP000001261">
    <property type="component" value="Unassembled WGS sequence"/>
</dbReference>
<dbReference type="GO" id="GO:0000139">
    <property type="term" value="C:Golgi membrane"/>
    <property type="evidence" value="ECO:0007669"/>
    <property type="project" value="UniProtKB-SubCell"/>
</dbReference>
<dbReference type="GO" id="GO:0009306">
    <property type="term" value="P:protein secretion"/>
    <property type="evidence" value="ECO:0007669"/>
    <property type="project" value="TreeGrafter"/>
</dbReference>
<dbReference type="GO" id="GO:0016192">
    <property type="term" value="P:vesicle-mediated transport"/>
    <property type="evidence" value="ECO:0007669"/>
    <property type="project" value="TreeGrafter"/>
</dbReference>
<dbReference type="InterPro" id="IPR008564">
    <property type="entry name" value="TVP23-like"/>
</dbReference>
<dbReference type="PANTHER" id="PTHR13019">
    <property type="entry name" value="GOLGI APPARATUS MEMBRANE PROTEIN TVP23"/>
    <property type="match status" value="1"/>
</dbReference>
<dbReference type="PANTHER" id="PTHR13019:SF7">
    <property type="entry name" value="GOLGI APPARATUS MEMBRANE PROTEIN TVP23"/>
    <property type="match status" value="1"/>
</dbReference>
<dbReference type="Pfam" id="PF05832">
    <property type="entry name" value="DUF846"/>
    <property type="match status" value="1"/>
</dbReference>
<evidence type="ECO:0000250" key="1"/>
<evidence type="ECO:0000255" key="2"/>
<evidence type="ECO:0000305" key="3"/>
<name>TVP23_COCIM</name>
<keyword id="KW-0325">Glycoprotein</keyword>
<keyword id="KW-0333">Golgi apparatus</keyword>
<keyword id="KW-0472">Membrane</keyword>
<keyword id="KW-1185">Reference proteome</keyword>
<keyword id="KW-0812">Transmembrane</keyword>
<keyword id="KW-1133">Transmembrane helix</keyword>
<protein>
    <recommendedName>
        <fullName>Golgi apparatus membrane protein TVP23</fullName>
    </recommendedName>
</protein>
<gene>
    <name type="primary">TVP23</name>
    <name type="ORF">CIMG_00634</name>
</gene>
<proteinExistence type="inferred from homology"/>
<sequence>MDQQRTGDLNWRLSAHPITLLFFLGFRIGSLLMYLFGVLFISDFVLVFILTLLLLSADFYYLKNIAGRRLVGLRWWNEVNTSTGDSNWVFESSDPNTRTINATDKRFFWLSLYATPALWIGLAILAIIRLQSVIWLSLVGIALILTVTNTLAFSRCDRFSQASTFASSALSGGITSNLTRGVFGRLFR</sequence>
<organism>
    <name type="scientific">Coccidioides immitis (strain RS)</name>
    <name type="common">Valley fever fungus</name>
    <dbReference type="NCBI Taxonomy" id="246410"/>
    <lineage>
        <taxon>Eukaryota</taxon>
        <taxon>Fungi</taxon>
        <taxon>Dikarya</taxon>
        <taxon>Ascomycota</taxon>
        <taxon>Pezizomycotina</taxon>
        <taxon>Eurotiomycetes</taxon>
        <taxon>Eurotiomycetidae</taxon>
        <taxon>Onygenales</taxon>
        <taxon>Onygenaceae</taxon>
        <taxon>Coccidioides</taxon>
    </lineage>
</organism>
<reference key="1">
    <citation type="journal article" date="2009" name="Genome Res.">
        <title>Comparative genomic analyses of the human fungal pathogens Coccidioides and their relatives.</title>
        <authorList>
            <person name="Sharpton T.J."/>
            <person name="Stajich J.E."/>
            <person name="Rounsley S.D."/>
            <person name="Gardner M.J."/>
            <person name="Wortman J.R."/>
            <person name="Jordar V.S."/>
            <person name="Maiti R."/>
            <person name="Kodira C.D."/>
            <person name="Neafsey D.E."/>
            <person name="Zeng Q."/>
            <person name="Hung C.-Y."/>
            <person name="McMahan C."/>
            <person name="Muszewska A."/>
            <person name="Grynberg M."/>
            <person name="Mandel M.A."/>
            <person name="Kellner E.M."/>
            <person name="Barker B.M."/>
            <person name="Galgiani J.N."/>
            <person name="Orbach M.J."/>
            <person name="Kirkland T.N."/>
            <person name="Cole G.T."/>
            <person name="Henn M.R."/>
            <person name="Birren B.W."/>
            <person name="Taylor J.W."/>
        </authorList>
    </citation>
    <scope>NUCLEOTIDE SEQUENCE [LARGE SCALE GENOMIC DNA]</scope>
    <source>
        <strain>RS</strain>
    </source>
</reference>
<reference key="2">
    <citation type="journal article" date="2010" name="Genome Res.">
        <title>Population genomic sequencing of Coccidioides fungi reveals recent hybridization and transposon control.</title>
        <authorList>
            <person name="Neafsey D.E."/>
            <person name="Barker B.M."/>
            <person name="Sharpton T.J."/>
            <person name="Stajich J.E."/>
            <person name="Park D.J."/>
            <person name="Whiston E."/>
            <person name="Hung C.-Y."/>
            <person name="McMahan C."/>
            <person name="White J."/>
            <person name="Sykes S."/>
            <person name="Heiman D."/>
            <person name="Young S."/>
            <person name="Zeng Q."/>
            <person name="Abouelleil A."/>
            <person name="Aftuck L."/>
            <person name="Bessette D."/>
            <person name="Brown A."/>
            <person name="FitzGerald M."/>
            <person name="Lui A."/>
            <person name="Macdonald J.P."/>
            <person name="Priest M."/>
            <person name="Orbach M.J."/>
            <person name="Galgiani J.N."/>
            <person name="Kirkland T.N."/>
            <person name="Cole G.T."/>
            <person name="Birren B.W."/>
            <person name="Henn M.R."/>
            <person name="Taylor J.W."/>
            <person name="Rounsley S.D."/>
        </authorList>
    </citation>
    <scope>GENOME REANNOTATION</scope>
    <source>
        <strain>RS</strain>
    </source>
</reference>
<comment type="function">
    <text evidence="1">Golgi membrane protein involved in vesicular trafficking.</text>
</comment>
<comment type="subcellular location">
    <subcellularLocation>
        <location evidence="1">Golgi apparatus membrane</location>
        <topology evidence="1">Multi-pass membrane protein</topology>
    </subcellularLocation>
</comment>
<comment type="similarity">
    <text evidence="3">Belongs to the TVP23 family.</text>
</comment>